<proteinExistence type="evidence at transcript level"/>
<feature type="chain" id="PRO_0000445730" description="Exosome complex component RRP45">
    <location>
        <begin position="1"/>
        <end position="393"/>
    </location>
</feature>
<feature type="region of interest" description="ARE binding" evidence="1">
    <location>
        <begin position="1"/>
        <end position="268"/>
    </location>
</feature>
<keyword id="KW-0963">Cytoplasm</keyword>
<keyword id="KW-0271">Exosome</keyword>
<keyword id="KW-0539">Nucleus</keyword>
<keyword id="KW-1185">Reference proteome</keyword>
<keyword id="KW-0694">RNA-binding</keyword>
<keyword id="KW-0698">rRNA processing</keyword>
<accession>Q5XJQ5</accession>
<evidence type="ECO:0000250" key="1">
    <source>
        <dbReference type="UniProtKB" id="Q06265"/>
    </source>
</evidence>
<evidence type="ECO:0000269" key="2">
    <source>
    </source>
</evidence>
<evidence type="ECO:0000305" key="3"/>
<evidence type="ECO:0000312" key="4">
    <source>
        <dbReference type="ZFIN" id="ZDB-GENE-041010-180"/>
    </source>
</evidence>
<reference key="1">
    <citation type="journal article" date="2013" name="Nature">
        <title>The zebrafish reference genome sequence and its relationship to the human genome.</title>
        <authorList>
            <person name="Howe K."/>
            <person name="Clark M.D."/>
            <person name="Torroja C.F."/>
            <person name="Torrance J."/>
            <person name="Berthelot C."/>
            <person name="Muffato M."/>
            <person name="Collins J.E."/>
            <person name="Humphray S."/>
            <person name="McLaren K."/>
            <person name="Matthews L."/>
            <person name="McLaren S."/>
            <person name="Sealy I."/>
            <person name="Caccamo M."/>
            <person name="Churcher C."/>
            <person name="Scott C."/>
            <person name="Barrett J.C."/>
            <person name="Koch R."/>
            <person name="Rauch G.J."/>
            <person name="White S."/>
            <person name="Chow W."/>
            <person name="Kilian B."/>
            <person name="Quintais L.T."/>
            <person name="Guerra-Assuncao J.A."/>
            <person name="Zhou Y."/>
            <person name="Gu Y."/>
            <person name="Yen J."/>
            <person name="Vogel J.H."/>
            <person name="Eyre T."/>
            <person name="Redmond S."/>
            <person name="Banerjee R."/>
            <person name="Chi J."/>
            <person name="Fu B."/>
            <person name="Langley E."/>
            <person name="Maguire S.F."/>
            <person name="Laird G.K."/>
            <person name="Lloyd D."/>
            <person name="Kenyon E."/>
            <person name="Donaldson S."/>
            <person name="Sehra H."/>
            <person name="Almeida-King J."/>
            <person name="Loveland J."/>
            <person name="Trevanion S."/>
            <person name="Jones M."/>
            <person name="Quail M."/>
            <person name="Willey D."/>
            <person name="Hunt A."/>
            <person name="Burton J."/>
            <person name="Sims S."/>
            <person name="McLay K."/>
            <person name="Plumb B."/>
            <person name="Davis J."/>
            <person name="Clee C."/>
            <person name="Oliver K."/>
            <person name="Clark R."/>
            <person name="Riddle C."/>
            <person name="Elliot D."/>
            <person name="Threadgold G."/>
            <person name="Harden G."/>
            <person name="Ware D."/>
            <person name="Begum S."/>
            <person name="Mortimore B."/>
            <person name="Kerry G."/>
            <person name="Heath P."/>
            <person name="Phillimore B."/>
            <person name="Tracey A."/>
            <person name="Corby N."/>
            <person name="Dunn M."/>
            <person name="Johnson C."/>
            <person name="Wood J."/>
            <person name="Clark S."/>
            <person name="Pelan S."/>
            <person name="Griffiths G."/>
            <person name="Smith M."/>
            <person name="Glithero R."/>
            <person name="Howden P."/>
            <person name="Barker N."/>
            <person name="Lloyd C."/>
            <person name="Stevens C."/>
            <person name="Harley J."/>
            <person name="Holt K."/>
            <person name="Panagiotidis G."/>
            <person name="Lovell J."/>
            <person name="Beasley H."/>
            <person name="Henderson C."/>
            <person name="Gordon D."/>
            <person name="Auger K."/>
            <person name="Wright D."/>
            <person name="Collins J."/>
            <person name="Raisen C."/>
            <person name="Dyer L."/>
            <person name="Leung K."/>
            <person name="Robertson L."/>
            <person name="Ambridge K."/>
            <person name="Leongamornlert D."/>
            <person name="McGuire S."/>
            <person name="Gilderthorp R."/>
            <person name="Griffiths C."/>
            <person name="Manthravadi D."/>
            <person name="Nichol S."/>
            <person name="Barker G."/>
            <person name="Whitehead S."/>
            <person name="Kay M."/>
            <person name="Brown J."/>
            <person name="Murnane C."/>
            <person name="Gray E."/>
            <person name="Humphries M."/>
            <person name="Sycamore N."/>
            <person name="Barker D."/>
            <person name="Saunders D."/>
            <person name="Wallis J."/>
            <person name="Babbage A."/>
            <person name="Hammond S."/>
            <person name="Mashreghi-Mohammadi M."/>
            <person name="Barr L."/>
            <person name="Martin S."/>
            <person name="Wray P."/>
            <person name="Ellington A."/>
            <person name="Matthews N."/>
            <person name="Ellwood M."/>
            <person name="Woodmansey R."/>
            <person name="Clark G."/>
            <person name="Cooper J."/>
            <person name="Tromans A."/>
            <person name="Grafham D."/>
            <person name="Skuce C."/>
            <person name="Pandian R."/>
            <person name="Andrews R."/>
            <person name="Harrison E."/>
            <person name="Kimberley A."/>
            <person name="Garnett J."/>
            <person name="Fosker N."/>
            <person name="Hall R."/>
            <person name="Garner P."/>
            <person name="Kelly D."/>
            <person name="Bird C."/>
            <person name="Palmer S."/>
            <person name="Gehring I."/>
            <person name="Berger A."/>
            <person name="Dooley C.M."/>
            <person name="Ersan-Urun Z."/>
            <person name="Eser C."/>
            <person name="Geiger H."/>
            <person name="Geisler M."/>
            <person name="Karotki L."/>
            <person name="Kirn A."/>
            <person name="Konantz J."/>
            <person name="Konantz M."/>
            <person name="Oberlander M."/>
            <person name="Rudolph-Geiger S."/>
            <person name="Teucke M."/>
            <person name="Lanz C."/>
            <person name="Raddatz G."/>
            <person name="Osoegawa K."/>
            <person name="Zhu B."/>
            <person name="Rapp A."/>
            <person name="Widaa S."/>
            <person name="Langford C."/>
            <person name="Yang F."/>
            <person name="Schuster S.C."/>
            <person name="Carter N.P."/>
            <person name="Harrow J."/>
            <person name="Ning Z."/>
            <person name="Herrero J."/>
            <person name="Searle S.M."/>
            <person name="Enright A."/>
            <person name="Geisler R."/>
            <person name="Plasterk R.H."/>
            <person name="Lee C."/>
            <person name="Westerfield M."/>
            <person name="de Jong P.J."/>
            <person name="Zon L.I."/>
            <person name="Postlethwait J.H."/>
            <person name="Nusslein-Volhard C."/>
            <person name="Hubbard T.J."/>
            <person name="Roest Crollius H."/>
            <person name="Rogers J."/>
            <person name="Stemple D.L."/>
        </authorList>
    </citation>
    <scope>NUCLEOTIDE SEQUENCE [LARGE SCALE GENOMIC DNA]</scope>
    <source>
        <strain>Tuebingen</strain>
    </source>
</reference>
<reference key="2">
    <citation type="submission" date="2004-10" db="EMBL/GenBank/DDBJ databases">
        <authorList>
            <consortium name="NIH - Zebrafish Gene Collection (ZGC) project"/>
        </authorList>
    </citation>
    <scope>NUCLEOTIDE SEQUENCE [LARGE SCALE MRNA]</scope>
    <source>
        <tissue>Olfactory epithelium</tissue>
    </source>
</reference>
<reference key="3">
    <citation type="journal article" date="2018" name="Am. J. Hum. Genet.">
        <title>Variants in EXOSC9 disrupt the RNA exosome and result in cerebellar atrophy with spinal motor neuronopathy.</title>
        <authorList>
            <person name="Burns D.T."/>
            <person name="Donkervoort S."/>
            <person name="Mueller J.S."/>
            <person name="Knierim E."/>
            <person name="Bharucha-Goebel D."/>
            <person name="Faqeih E.A."/>
            <person name="Bell S.K."/>
            <person name="Alfaifi A.Y."/>
            <person name="Monies D."/>
            <person name="Millan F."/>
            <person name="Retterer K."/>
            <person name="Dyack S."/>
            <person name="MacKay S."/>
            <person name="Morales-Gonzalez S."/>
            <person name="Giunta M."/>
            <person name="Munro B."/>
            <person name="Hudson G."/>
            <person name="Scavina M."/>
            <person name="Baker L."/>
            <person name="Massini T.C."/>
            <person name="Lek M."/>
            <person name="Hu Y."/>
            <person name="Ezzo D."/>
            <person name="Alkuraya F.S."/>
            <person name="Kang P.B."/>
            <person name="Griffin H."/>
            <person name="Foley A.R."/>
            <person name="Schuelke M."/>
            <person name="Horvath R."/>
            <person name="Boennemann C.G."/>
        </authorList>
    </citation>
    <scope>DISRUPTION PHENOTYPE</scope>
</reference>
<gene>
    <name evidence="4" type="primary">exosc9</name>
</gene>
<dbReference type="EMBL" id="BX323984">
    <property type="status" value="NOT_ANNOTATED_CDS"/>
    <property type="molecule type" value="Genomic_DNA"/>
</dbReference>
<dbReference type="EMBL" id="BC083243">
    <property type="protein sequence ID" value="AAH83243.1"/>
    <property type="molecule type" value="mRNA"/>
</dbReference>
<dbReference type="EMBL" id="BC164713">
    <property type="protein sequence ID" value="AAI64713.1"/>
    <property type="molecule type" value="mRNA"/>
</dbReference>
<dbReference type="RefSeq" id="NP_001006077.1">
    <property type="nucleotide sequence ID" value="NM_001006077.1"/>
</dbReference>
<dbReference type="SMR" id="Q5XJQ5"/>
<dbReference type="FunCoup" id="Q5XJQ5">
    <property type="interactions" value="2109"/>
</dbReference>
<dbReference type="STRING" id="7955.ENSDARP00000005262"/>
<dbReference type="PaxDb" id="7955-ENSDARP00000005262"/>
<dbReference type="Ensembl" id="ENSDART00000002886">
    <property type="protein sequence ID" value="ENSDARP00000005262"/>
    <property type="gene ID" value="ENSDARG00000006392"/>
</dbReference>
<dbReference type="GeneID" id="450057"/>
<dbReference type="KEGG" id="dre:450057"/>
<dbReference type="AGR" id="ZFIN:ZDB-GENE-041010-180"/>
<dbReference type="CTD" id="5393"/>
<dbReference type="ZFIN" id="ZDB-GENE-041010-180">
    <property type="gene designation" value="exosc9"/>
</dbReference>
<dbReference type="eggNOG" id="KOG1614">
    <property type="taxonomic scope" value="Eukaryota"/>
</dbReference>
<dbReference type="HOGENOM" id="CLU_038194_7_0_1"/>
<dbReference type="InParanoid" id="Q5XJQ5"/>
<dbReference type="OMA" id="GPQFENG"/>
<dbReference type="OrthoDB" id="10264038at2759"/>
<dbReference type="PhylomeDB" id="Q5XJQ5"/>
<dbReference type="TreeFam" id="TF300092"/>
<dbReference type="PRO" id="PR:Q5XJQ5"/>
<dbReference type="Proteomes" id="UP000000437">
    <property type="component" value="Chromosome 1"/>
</dbReference>
<dbReference type="Bgee" id="ENSDARG00000006392">
    <property type="expression patterns" value="Expressed in blastula and 28 other cell types or tissues"/>
</dbReference>
<dbReference type="ExpressionAtlas" id="Q5XJQ5">
    <property type="expression patterns" value="baseline"/>
</dbReference>
<dbReference type="GO" id="GO:0000177">
    <property type="term" value="C:cytoplasmic exosome (RNase complex)"/>
    <property type="evidence" value="ECO:0000318"/>
    <property type="project" value="GO_Central"/>
</dbReference>
<dbReference type="GO" id="GO:0000176">
    <property type="term" value="C:nuclear exosome (RNase complex)"/>
    <property type="evidence" value="ECO:0000318"/>
    <property type="project" value="GO_Central"/>
</dbReference>
<dbReference type="GO" id="GO:0005730">
    <property type="term" value="C:nucleolus"/>
    <property type="evidence" value="ECO:0007669"/>
    <property type="project" value="UniProtKB-SubCell"/>
</dbReference>
<dbReference type="GO" id="GO:0005654">
    <property type="term" value="C:nucleoplasm"/>
    <property type="evidence" value="ECO:0007669"/>
    <property type="project" value="UniProtKB-SubCell"/>
</dbReference>
<dbReference type="GO" id="GO:0035925">
    <property type="term" value="F:mRNA 3'-UTR AU-rich region binding"/>
    <property type="evidence" value="ECO:0000318"/>
    <property type="project" value="GO_Central"/>
</dbReference>
<dbReference type="GO" id="GO:0000467">
    <property type="term" value="P:exonucleolytic trimming to generate mature 3'-end of 5.8S rRNA from tricistronic rRNA transcript (SSU-rRNA, 5.8S rRNA, LSU-rRNA)"/>
    <property type="evidence" value="ECO:0000318"/>
    <property type="project" value="GO_Central"/>
</dbReference>
<dbReference type="GO" id="GO:0071028">
    <property type="term" value="P:nuclear mRNA surveillance"/>
    <property type="evidence" value="ECO:0000318"/>
    <property type="project" value="GO_Central"/>
</dbReference>
<dbReference type="GO" id="GO:0071035">
    <property type="term" value="P:nuclear polyadenylation-dependent rRNA catabolic process"/>
    <property type="evidence" value="ECO:0000318"/>
    <property type="project" value="GO_Central"/>
</dbReference>
<dbReference type="GO" id="GO:0016075">
    <property type="term" value="P:rRNA catabolic process"/>
    <property type="evidence" value="ECO:0000318"/>
    <property type="project" value="GO_Central"/>
</dbReference>
<dbReference type="GO" id="GO:0071038">
    <property type="term" value="P:TRAMP-dependent tRNA surveillance pathway"/>
    <property type="evidence" value="ECO:0000318"/>
    <property type="project" value="GO_Central"/>
</dbReference>
<dbReference type="GO" id="GO:0034473">
    <property type="term" value="P:U1 snRNA 3'-end processing"/>
    <property type="evidence" value="ECO:0000318"/>
    <property type="project" value="GO_Central"/>
</dbReference>
<dbReference type="GO" id="GO:0034475">
    <property type="term" value="P:U4 snRNA 3'-end processing"/>
    <property type="evidence" value="ECO:0000318"/>
    <property type="project" value="GO_Central"/>
</dbReference>
<dbReference type="GO" id="GO:0034476">
    <property type="term" value="P:U5 snRNA 3'-end processing"/>
    <property type="evidence" value="ECO:0000318"/>
    <property type="project" value="GO_Central"/>
</dbReference>
<dbReference type="CDD" id="cd11368">
    <property type="entry name" value="RNase_PH_RRP45"/>
    <property type="match status" value="1"/>
</dbReference>
<dbReference type="FunFam" id="3.30.230.70:FF:000005">
    <property type="entry name" value="Exosome complex component RRP45"/>
    <property type="match status" value="1"/>
</dbReference>
<dbReference type="Gene3D" id="3.30.230.70">
    <property type="entry name" value="GHMP Kinase, N-terminal domain"/>
    <property type="match status" value="1"/>
</dbReference>
<dbReference type="InterPro" id="IPR001247">
    <property type="entry name" value="ExoRNase_PH_dom1"/>
</dbReference>
<dbReference type="InterPro" id="IPR015847">
    <property type="entry name" value="ExoRNase_PH_dom2"/>
</dbReference>
<dbReference type="InterPro" id="IPR036345">
    <property type="entry name" value="ExoRNase_PH_dom2_sf"/>
</dbReference>
<dbReference type="InterPro" id="IPR050590">
    <property type="entry name" value="Exosome_comp_Rrp42_subfam"/>
</dbReference>
<dbReference type="InterPro" id="IPR027408">
    <property type="entry name" value="PNPase/RNase_PH_dom_sf"/>
</dbReference>
<dbReference type="InterPro" id="IPR020568">
    <property type="entry name" value="Ribosomal_Su5_D2-typ_SF"/>
</dbReference>
<dbReference type="InterPro" id="IPR033100">
    <property type="entry name" value="Rrp45"/>
</dbReference>
<dbReference type="PANTHER" id="PTHR11097:SF14">
    <property type="entry name" value="EXOSOME COMPLEX COMPONENT RRP45"/>
    <property type="match status" value="1"/>
</dbReference>
<dbReference type="PANTHER" id="PTHR11097">
    <property type="entry name" value="EXOSOME COMPLEX EXONUCLEASE RIBOSOMAL RNA PROCESSING PROTEIN"/>
    <property type="match status" value="1"/>
</dbReference>
<dbReference type="Pfam" id="PF01138">
    <property type="entry name" value="RNase_PH"/>
    <property type="match status" value="1"/>
</dbReference>
<dbReference type="Pfam" id="PF03725">
    <property type="entry name" value="RNase_PH_C"/>
    <property type="match status" value="1"/>
</dbReference>
<dbReference type="SUPFAM" id="SSF55666">
    <property type="entry name" value="Ribonuclease PH domain 2-like"/>
    <property type="match status" value="1"/>
</dbReference>
<dbReference type="SUPFAM" id="SSF54211">
    <property type="entry name" value="Ribosomal protein S5 domain 2-like"/>
    <property type="match status" value="1"/>
</dbReference>
<organism>
    <name type="scientific">Danio rerio</name>
    <name type="common">Zebrafish</name>
    <name type="synonym">Brachydanio rerio</name>
    <dbReference type="NCBI Taxonomy" id="7955"/>
    <lineage>
        <taxon>Eukaryota</taxon>
        <taxon>Metazoa</taxon>
        <taxon>Chordata</taxon>
        <taxon>Craniata</taxon>
        <taxon>Vertebrata</taxon>
        <taxon>Euteleostomi</taxon>
        <taxon>Actinopterygii</taxon>
        <taxon>Neopterygii</taxon>
        <taxon>Teleostei</taxon>
        <taxon>Ostariophysi</taxon>
        <taxon>Cypriniformes</taxon>
        <taxon>Danionidae</taxon>
        <taxon>Danioninae</taxon>
        <taxon>Danio</taxon>
    </lineage>
</organism>
<sequence length="393" mass="44135">MRDTPLSNCERLFLLKAIKEKKRLDGRQTYDYRNIKISFGTDYGCCVVELGKTRVLSQVSCELVPPKDSRPTEGIVFFNLELSPMASPAFEPNRQSELLVTLNRQLERCLRNSKCIDTESLCVVSGEKVWQIRVDVHVLNHDGNLMDAASIAAISALSHFRRPDVAIQGRDVTVFGPEERDPIPLSIYHMPICVSFAFFLQGSFLLVDPCEREERVKDGLLVIAMNKHREICSIQSSGGIMLLKEQVLRCSKIASVKVSEITELINKALENDKKVRKEGGKFGFAESMPKERITTLKRDEAPVEMTDVKETADDIVQRTETTTETVPSPILVATGTAQIGEGIVNSWGLDEDEDDELQTEDRKTDEVVVITDSEEEEVVILNDQKSKKTSKQK</sequence>
<protein>
    <recommendedName>
        <fullName>Exosome complex component RRP45</fullName>
    </recommendedName>
    <alternativeName>
        <fullName>Exosome component 9</fullName>
    </alternativeName>
</protein>
<name>EXOS9_DANRE</name>
<comment type="function">
    <text evidence="1">Non-catalytic component of the RNA exosome complex which has 3'-&gt;5' exoribonuclease activity and participates in a multitude of cellular RNA processing and degradation events. In the nucleus, the RNA exosome complex is involved in proper maturation of stable RNA species such as rRNA, snRNA and snoRNA, in the elimination of RNA processing by-products and non-coding 'pervasive' transcripts, such as antisense RNA species and promoter-upstream transcripts (PROMPTs), and of mRNAs with processing defects, thereby limiting or excluding their export to the cytoplasm. In the cytoplasm, the RNA exosome complex is involved in general mRNA turnover and specifically degrades inherently unstable mRNAs containing AU-rich elements (AREs) within their 3' untranslated regions, and in RNA surveillance pathways, preventing translation of aberrant mRNAs.</text>
</comment>
<comment type="subunit">
    <text evidence="1">Component of the RNA exosome complex.</text>
</comment>
<comment type="subcellular location">
    <subcellularLocation>
        <location evidence="1">Cytoplasm</location>
    </subcellularLocation>
    <subcellularLocation>
        <location evidence="1">Nucleus</location>
    </subcellularLocation>
    <subcellularLocation>
        <location evidence="1">Nucleus</location>
        <location evidence="1">Nucleolus</location>
    </subcellularLocation>
    <subcellularLocation>
        <location evidence="1">Nucleus</location>
        <location evidence="1">Nucleoplasm</location>
    </subcellularLocation>
</comment>
<comment type="disruption phenotype">
    <text evidence="2">Morpholino knockdown of the protein affects brain and neuromuscular development. Morphant embryos have small heads, small or absent eyes, truncated bodies, and reduced and damaged myofibers. Motor axons fail to migrate properly to the neuromuscular junctions. The brain has abnormal morphology, the cerebellum and hindbrain are absent.</text>
</comment>
<comment type="similarity">
    <text evidence="3">Belongs to the RNase PH family.</text>
</comment>
<comment type="caution">
    <text evidence="3">The six exosome core subunits containing a RNase PH-domain are not phosphorolytically active.</text>
</comment>